<organism>
    <name type="scientific">Klebsiella pneumoniae</name>
    <dbReference type="NCBI Taxonomy" id="573"/>
    <lineage>
        <taxon>Bacteria</taxon>
        <taxon>Pseudomonadati</taxon>
        <taxon>Pseudomonadota</taxon>
        <taxon>Gammaproteobacteria</taxon>
        <taxon>Enterobacterales</taxon>
        <taxon>Enterobacteriaceae</taxon>
        <taxon>Klebsiella/Raoultella group</taxon>
        <taxon>Klebsiella</taxon>
        <taxon>Klebsiella pneumoniae complex</taxon>
    </lineage>
</organism>
<accession>P0A4L8</accession>
<accession>P97037</accession>
<dbReference type="EMBL" id="U32616">
    <property type="protein sequence ID" value="AAB49809.1"/>
    <property type="molecule type" value="Genomic_DNA"/>
</dbReference>
<dbReference type="SMR" id="P0A4L8"/>
<dbReference type="GO" id="GO:0042597">
    <property type="term" value="C:periplasmic space"/>
    <property type="evidence" value="ECO:0007669"/>
    <property type="project" value="UniProtKB-SubCell"/>
</dbReference>
<dbReference type="GO" id="GO:0015035">
    <property type="term" value="F:protein-disulfide reductase activity"/>
    <property type="evidence" value="ECO:0007669"/>
    <property type="project" value="UniProtKB-UniRule"/>
</dbReference>
<dbReference type="CDD" id="cd03019">
    <property type="entry name" value="DsbA_DsbA"/>
    <property type="match status" value="1"/>
</dbReference>
<dbReference type="Gene3D" id="3.40.30.10">
    <property type="entry name" value="Glutaredoxin"/>
    <property type="match status" value="1"/>
</dbReference>
<dbReference type="HAMAP" id="MF_00932">
    <property type="entry name" value="DsbL"/>
    <property type="match status" value="1"/>
</dbReference>
<dbReference type="InterPro" id="IPR001853">
    <property type="entry name" value="DSBA-like_thioredoxin_dom"/>
</dbReference>
<dbReference type="InterPro" id="IPR023205">
    <property type="entry name" value="DsbA/DsbL"/>
</dbReference>
<dbReference type="InterPro" id="IPR028588">
    <property type="entry name" value="DsbL"/>
</dbReference>
<dbReference type="InterPro" id="IPR050824">
    <property type="entry name" value="Thiol_disulfide_DsbA"/>
</dbReference>
<dbReference type="InterPro" id="IPR036249">
    <property type="entry name" value="Thioredoxin-like_sf"/>
</dbReference>
<dbReference type="InterPro" id="IPR013766">
    <property type="entry name" value="Thioredoxin_domain"/>
</dbReference>
<dbReference type="PANTHER" id="PTHR35891">
    <property type="entry name" value="THIOL:DISULFIDE INTERCHANGE PROTEIN DSBA"/>
    <property type="match status" value="1"/>
</dbReference>
<dbReference type="PANTHER" id="PTHR35891:SF3">
    <property type="entry name" value="THIOL:DISULFIDE INTERCHANGE PROTEIN DSBL"/>
    <property type="match status" value="1"/>
</dbReference>
<dbReference type="Pfam" id="PF01323">
    <property type="entry name" value="DSBA"/>
    <property type="match status" value="1"/>
</dbReference>
<dbReference type="PIRSF" id="PIRSF001488">
    <property type="entry name" value="Tdi_protein"/>
    <property type="match status" value="1"/>
</dbReference>
<dbReference type="SUPFAM" id="SSF52833">
    <property type="entry name" value="Thioredoxin-like"/>
    <property type="match status" value="1"/>
</dbReference>
<dbReference type="PROSITE" id="PS51352">
    <property type="entry name" value="THIOREDOXIN_2"/>
    <property type="match status" value="1"/>
</dbReference>
<reference key="1">
    <citation type="journal article" date="1996" name="Microbiol. Immunol.">
        <title>Cloning and sequencing of the Klebsiella K-36 astA gene, encoding an arylsulfate sulfotransferase.</title>
        <authorList>
            <person name="Baek M.C."/>
            <person name="Kim S.K."/>
            <person name="Kim D.H."/>
            <person name="Kim B.K."/>
            <person name="Choi E.C."/>
        </authorList>
    </citation>
    <scope>NUCLEOTIDE SEQUENCE [GENOMIC DNA]</scope>
    <source>
        <strain>K-36</strain>
    </source>
</reference>
<name>DSBL_KLEPN</name>
<proteinExistence type="inferred from homology"/>
<gene>
    <name evidence="1" type="primary">dsbL</name>
</gene>
<feature type="signal peptide" evidence="1">
    <location>
        <begin position="1"/>
        <end position="27"/>
    </location>
</feature>
<feature type="chain" id="PRO_0000034256" description="Thiol:disulfide interchange protein DsbL">
    <location>
        <begin position="28"/>
        <end position="222"/>
    </location>
</feature>
<feature type="domain" description="Thioredoxin">
    <location>
        <begin position="28"/>
        <end position="221"/>
    </location>
</feature>
<feature type="disulfide bond" description="Redox-active" evidence="1">
    <location>
        <begin position="56"/>
        <end position="59"/>
    </location>
</feature>
<evidence type="ECO:0000255" key="1">
    <source>
        <dbReference type="HAMAP-Rule" id="MF_00932"/>
    </source>
</evidence>
<comment type="function">
    <text evidence="1">Involved in disulfide-bond formation. Acts by transferring its disulfide bond to other proteins. Part of a redox system composed of DsbI and DsbL that mediates formation of an essential disulfide bond in AssT.</text>
</comment>
<comment type="subunit">
    <text evidence="1">Interacts with DsbI.</text>
</comment>
<comment type="subcellular location">
    <subcellularLocation>
        <location evidence="1">Periplasm</location>
    </subcellularLocation>
</comment>
<comment type="similarity">
    <text evidence="1">Belongs to the thioredoxin family. DsbL subfamily.</text>
</comment>
<keyword id="KW-1015">Disulfide bond</keyword>
<keyword id="KW-0574">Periplasm</keyword>
<keyword id="KW-0676">Redox-active center</keyword>
<keyword id="KW-0732">Signal</keyword>
<sequence>MSKLGISSLFKTILLTAALAVSFTASAFTEGTDYMVLEKPIPNADKTLIKVFSYACPFCYKYDKAVTGPVSEKVKDIVAFTPFHLETKGEYGKQASEVFAVLINKDKAAGISLFDANSQFKKAKFAYYAAYHDKKERWSDGKDPAAFIKTGLDAAGMSQADFEAALKEPAVQETLEKWKASYDVAKIQGVPAYVVNGKYLIYTKSIKSIDAMADLIRELASK</sequence>
<protein>
    <recommendedName>
        <fullName evidence="1">Thiol:disulfide interchange protein DsbL</fullName>
    </recommendedName>
</protein>